<comment type="function">
    <text evidence="1">Involved in mitochondrial migration along actin filaments.</text>
</comment>
<comment type="subcellular location">
    <subcellularLocation>
        <location evidence="1">Cytoplasm</location>
        <location evidence="1">Cytoskeleton</location>
        <location evidence="1">Actin patch</location>
    </subcellularLocation>
    <text evidence="1">Cortical actin patches.</text>
</comment>
<comment type="similarity">
    <text evidence="3">Belongs to the AIM21 family.</text>
</comment>
<gene>
    <name type="primary">AIM21</name>
    <name type="ordered locus">KLTH0F13376g</name>
</gene>
<sequence length="650" mass="70179">MQETQDQLEQMKTMISKPAGRKDYSLMQEESVPSTPSGSTVGSLITAVGQNEHNKVRNDEEATSSASPDGTPSTVDEGDVEESNSDISGVNEQNFENELETSLAEGKSWHSAQDLNKSHTEEPIDDPNEDKMSEINLEPSNKGIEKNATVTEKSATILAKELSATTDVKKKCLRAAKPNELPAEEYCNEDLKGAISGLERRTSKPDLETNEIQDAKSLESGIGSSGNVNEVPKQNAKHPMDSCQNLEQSAGTTSAEKEAIRALESQSSGTSQASLAKHKSETNTSIQSSTQETAQAPTVYEELGSEAERSKSHAQAYKNQTDEKEMSGEIIKENPENAIDDASSPSKEYDTPSFAGKPEEGSENLKAPAKDGEPVDSEKKKKNGGTPIEGRPLQSLEGDAPQVPQRPNKRPPPKKPSSKIAAFQAMLKQQQLMDASKTKDKQIDSGNSLLSGKRANITNNLNGIFGLPGMAPGMTPGMVPPQRPPARQQTGSDGGSQSSENQTSSQSAAPSGPQRRARGPKGRKLPAHIANVEKVETSIKTNEIQVLKTWSLKFQKISPTCSEKDSEPLKDIPESGVVSPSNPKSMSELNGVPVESDVICERETDILQNSKNEMNDLEDTNEDNVKEPRQFSIPTHFDLGESDANQEESS</sequence>
<reference key="1">
    <citation type="journal article" date="2009" name="Genome Res.">
        <title>Comparative genomics of protoploid Saccharomycetaceae.</title>
        <authorList>
            <consortium name="The Genolevures Consortium"/>
            <person name="Souciet J.-L."/>
            <person name="Dujon B."/>
            <person name="Gaillardin C."/>
            <person name="Johnston M."/>
            <person name="Baret P.V."/>
            <person name="Cliften P."/>
            <person name="Sherman D.J."/>
            <person name="Weissenbach J."/>
            <person name="Westhof E."/>
            <person name="Wincker P."/>
            <person name="Jubin C."/>
            <person name="Poulain J."/>
            <person name="Barbe V."/>
            <person name="Segurens B."/>
            <person name="Artiguenave F."/>
            <person name="Anthouard V."/>
            <person name="Vacherie B."/>
            <person name="Val M.-E."/>
            <person name="Fulton R.S."/>
            <person name="Minx P."/>
            <person name="Wilson R."/>
            <person name="Durrens P."/>
            <person name="Jean G."/>
            <person name="Marck C."/>
            <person name="Martin T."/>
            <person name="Nikolski M."/>
            <person name="Rolland T."/>
            <person name="Seret M.-L."/>
            <person name="Casaregola S."/>
            <person name="Despons L."/>
            <person name="Fairhead C."/>
            <person name="Fischer G."/>
            <person name="Lafontaine I."/>
            <person name="Leh V."/>
            <person name="Lemaire M."/>
            <person name="de Montigny J."/>
            <person name="Neuveglise C."/>
            <person name="Thierry A."/>
            <person name="Blanc-Lenfle I."/>
            <person name="Bleykasten C."/>
            <person name="Diffels J."/>
            <person name="Fritsch E."/>
            <person name="Frangeul L."/>
            <person name="Goeffon A."/>
            <person name="Jauniaux N."/>
            <person name="Kachouri-Lafond R."/>
            <person name="Payen C."/>
            <person name="Potier S."/>
            <person name="Pribylova L."/>
            <person name="Ozanne C."/>
            <person name="Richard G.-F."/>
            <person name="Sacerdot C."/>
            <person name="Straub M.-L."/>
            <person name="Talla E."/>
        </authorList>
    </citation>
    <scope>NUCLEOTIDE SEQUENCE [LARGE SCALE GENOMIC DNA]</scope>
    <source>
        <strain>ATCC 56472 / CBS 6340 / NRRL Y-8284</strain>
    </source>
</reference>
<protein>
    <recommendedName>
        <fullName>Altered inheritance of mitochondria protein 21</fullName>
    </recommendedName>
</protein>
<accession>C5DJ44</accession>
<keyword id="KW-0963">Cytoplasm</keyword>
<keyword id="KW-0206">Cytoskeleton</keyword>
<keyword id="KW-1185">Reference proteome</keyword>
<name>AIM21_LACTC</name>
<evidence type="ECO:0000250" key="1"/>
<evidence type="ECO:0000256" key="2">
    <source>
        <dbReference type="SAM" id="MobiDB-lite"/>
    </source>
</evidence>
<evidence type="ECO:0000305" key="3"/>
<dbReference type="EMBL" id="CU928170">
    <property type="protein sequence ID" value="CAR24333.1"/>
    <property type="molecule type" value="Genomic_DNA"/>
</dbReference>
<dbReference type="RefSeq" id="XP_002554770.1">
    <property type="nucleotide sequence ID" value="XM_002554724.1"/>
</dbReference>
<dbReference type="FunCoup" id="C5DJ44">
    <property type="interactions" value="120"/>
</dbReference>
<dbReference type="STRING" id="559295.C5DJ44"/>
<dbReference type="GeneID" id="8292994"/>
<dbReference type="KEGG" id="lth:KLTH0F13376g"/>
<dbReference type="eggNOG" id="ENOG502S25J">
    <property type="taxonomic scope" value="Eukaryota"/>
</dbReference>
<dbReference type="HOGENOM" id="CLU_421542_0_0_1"/>
<dbReference type="InParanoid" id="C5DJ44"/>
<dbReference type="OMA" id="VICERET"/>
<dbReference type="OrthoDB" id="3995855at2759"/>
<dbReference type="Proteomes" id="UP000002036">
    <property type="component" value="Chromosome F"/>
</dbReference>
<dbReference type="GO" id="GO:0030479">
    <property type="term" value="C:actin cortical patch"/>
    <property type="evidence" value="ECO:0007669"/>
    <property type="project" value="UniProtKB-SubCell"/>
</dbReference>
<dbReference type="InterPro" id="IPR021582">
    <property type="entry name" value="Aim21"/>
</dbReference>
<dbReference type="Pfam" id="PF11489">
    <property type="entry name" value="Aim21"/>
    <property type="match status" value="1"/>
</dbReference>
<feature type="chain" id="PRO_0000399522" description="Altered inheritance of mitochondria protein 21">
    <location>
        <begin position="1"/>
        <end position="650"/>
    </location>
</feature>
<feature type="region of interest" description="Disordered" evidence="2">
    <location>
        <begin position="1"/>
        <end position="148"/>
    </location>
</feature>
<feature type="region of interest" description="Disordered" evidence="2">
    <location>
        <begin position="197"/>
        <end position="529"/>
    </location>
</feature>
<feature type="region of interest" description="Disordered" evidence="2">
    <location>
        <begin position="559"/>
        <end position="650"/>
    </location>
</feature>
<feature type="compositionally biased region" description="Polar residues" evidence="2">
    <location>
        <begin position="1"/>
        <end position="10"/>
    </location>
</feature>
<feature type="compositionally biased region" description="Polar residues" evidence="2">
    <location>
        <begin position="31"/>
        <end position="51"/>
    </location>
</feature>
<feature type="compositionally biased region" description="Polar residues" evidence="2">
    <location>
        <begin position="63"/>
        <end position="74"/>
    </location>
</feature>
<feature type="compositionally biased region" description="Polar residues" evidence="2">
    <location>
        <begin position="85"/>
        <end position="96"/>
    </location>
</feature>
<feature type="compositionally biased region" description="Basic and acidic residues" evidence="2">
    <location>
        <begin position="198"/>
        <end position="217"/>
    </location>
</feature>
<feature type="compositionally biased region" description="Polar residues" evidence="2">
    <location>
        <begin position="242"/>
        <end position="254"/>
    </location>
</feature>
<feature type="compositionally biased region" description="Polar residues" evidence="2">
    <location>
        <begin position="264"/>
        <end position="274"/>
    </location>
</feature>
<feature type="compositionally biased region" description="Polar residues" evidence="2">
    <location>
        <begin position="282"/>
        <end position="296"/>
    </location>
</feature>
<feature type="compositionally biased region" description="Basic and acidic residues" evidence="2">
    <location>
        <begin position="320"/>
        <end position="335"/>
    </location>
</feature>
<feature type="compositionally biased region" description="Basic and acidic residues" evidence="2">
    <location>
        <begin position="368"/>
        <end position="379"/>
    </location>
</feature>
<feature type="compositionally biased region" description="Basic residues" evidence="2">
    <location>
        <begin position="407"/>
        <end position="417"/>
    </location>
</feature>
<feature type="compositionally biased region" description="Polar residues" evidence="2">
    <location>
        <begin position="444"/>
        <end position="462"/>
    </location>
</feature>
<feature type="compositionally biased region" description="Low complexity" evidence="2">
    <location>
        <begin position="488"/>
        <end position="507"/>
    </location>
</feature>
<feature type="compositionally biased region" description="Basic residues" evidence="2">
    <location>
        <begin position="515"/>
        <end position="526"/>
    </location>
</feature>
<feature type="compositionally biased region" description="Basic and acidic residues" evidence="2">
    <location>
        <begin position="562"/>
        <end position="573"/>
    </location>
</feature>
<feature type="compositionally biased region" description="Polar residues" evidence="2">
    <location>
        <begin position="578"/>
        <end position="588"/>
    </location>
</feature>
<feature type="compositionally biased region" description="Acidic residues" evidence="2">
    <location>
        <begin position="640"/>
        <end position="650"/>
    </location>
</feature>
<proteinExistence type="inferred from homology"/>
<organism>
    <name type="scientific">Lachancea thermotolerans (strain ATCC 56472 / CBS 6340 / NRRL Y-8284)</name>
    <name type="common">Yeast</name>
    <name type="synonym">Kluyveromyces thermotolerans</name>
    <dbReference type="NCBI Taxonomy" id="559295"/>
    <lineage>
        <taxon>Eukaryota</taxon>
        <taxon>Fungi</taxon>
        <taxon>Dikarya</taxon>
        <taxon>Ascomycota</taxon>
        <taxon>Saccharomycotina</taxon>
        <taxon>Saccharomycetes</taxon>
        <taxon>Saccharomycetales</taxon>
        <taxon>Saccharomycetaceae</taxon>
        <taxon>Lachancea</taxon>
    </lineage>
</organism>